<organism>
    <name type="scientific">Pisum sativum</name>
    <name type="common">Garden pea</name>
    <name type="synonym">Lathyrus oleraceus</name>
    <dbReference type="NCBI Taxonomy" id="3888"/>
    <lineage>
        <taxon>Eukaryota</taxon>
        <taxon>Viridiplantae</taxon>
        <taxon>Streptophyta</taxon>
        <taxon>Embryophyta</taxon>
        <taxon>Tracheophyta</taxon>
        <taxon>Spermatophyta</taxon>
        <taxon>Magnoliopsida</taxon>
        <taxon>eudicotyledons</taxon>
        <taxon>Gunneridae</taxon>
        <taxon>Pentapetalae</taxon>
        <taxon>rosids</taxon>
        <taxon>fabids</taxon>
        <taxon>Fabales</taxon>
        <taxon>Fabaceae</taxon>
        <taxon>Papilionoideae</taxon>
        <taxon>50 kb inversion clade</taxon>
        <taxon>NPAAA clade</taxon>
        <taxon>Hologalegina</taxon>
        <taxon>IRL clade</taxon>
        <taxon>Fabeae</taxon>
        <taxon>Pisum</taxon>
    </lineage>
</organism>
<comment type="function">
    <text>GTPase involved in protein precursor import into chloroplasts. Seems to recognize chloroplast-destined precursor proteins and regulate their presentation to the translocation channel through GTP hydrolysis.</text>
</comment>
<comment type="subunit">
    <text evidence="3">Homodimer and monomer. Part of the TOC core complex that includes a protein for the specific recognition of transit peptides surrounded by a ring composed of four proteins forming translocation channels, and four to five GTP-binding proteins providing energy. This core complex can interact with components of the TIC complex to form a larger import complex. Chloroplastic protein precursor such as prSS (precursor of the RuBisCO small subunit) interacts with these complexes. The TOC complex contains a specific subset of polar lipids such as digalactosyldiacylglyceride (DGDG), phosphatidylcholine (PC) and phosphatidylglycerol (PG). TOC34 interacts at least with TOC75.</text>
</comment>
<comment type="interaction">
    <interactant intactId="EBI-638506">
        <id>Q41009</id>
    </interactant>
    <interactant intactId="EBI-638506">
        <id>Q41009</id>
        <label>TOC34</label>
    </interactant>
    <organismsDiffer>false</organismsDiffer>
    <experiments>5</experiments>
</comment>
<comment type="interaction">
    <interactant intactId="EBI-638506">
        <id>Q41009</id>
    </interactant>
    <interactant intactId="EBI-638487">
        <id>Q9MUK5</id>
        <label>TOC64</label>
    </interactant>
    <organismsDiffer>false</organismsDiffer>
    <experiments>6</experiments>
</comment>
<comment type="interaction">
    <interactant intactId="EBI-638506">
        <id>Q41009</id>
    </interactant>
    <interactant intactId="EBI-1803304">
        <id>P48347</id>
        <label>GRF10</label>
    </interactant>
    <organismsDiffer>true</organismsDiffer>
    <experiments>2</experiments>
</comment>
<comment type="subcellular location">
    <subcellularLocation>
        <location>Plastid</location>
        <location>Chloroplast outer membrane</location>
    </subcellularLocation>
</comment>
<comment type="similarity">
    <text evidence="4">Belongs to the TRAFAC class TrmE-Era-EngA-EngB-Septin-like GTPase superfamily. AIG1/Toc34/Toc159-like paraseptin GTPase family. TOC34 subfamily.</text>
</comment>
<feature type="chain" id="PRO_0000144793" description="Translocase of chloroplast 34">
    <location>
        <begin position="1"/>
        <end position="310"/>
    </location>
</feature>
<feature type="topological domain" description="Cytoplasmic" evidence="1">
    <location>
        <begin position="1"/>
        <end position="268"/>
    </location>
</feature>
<feature type="transmembrane region" description="Helical" evidence="1">
    <location>
        <begin position="269"/>
        <end position="289"/>
    </location>
</feature>
<feature type="topological domain" description="Chloroplast intermembrane" evidence="1">
    <location>
        <begin position="290"/>
        <end position="310"/>
    </location>
</feature>
<feature type="domain" description="AIG1-type G" evidence="2">
    <location>
        <begin position="37"/>
        <end position="260"/>
    </location>
</feature>
<feature type="region of interest" description="G1" evidence="2">
    <location>
        <begin position="46"/>
        <end position="53"/>
    </location>
</feature>
<feature type="region of interest" description="Homodimerization">
    <location>
        <begin position="68"/>
        <end position="71"/>
    </location>
</feature>
<feature type="region of interest" description="G2" evidence="2">
    <location>
        <begin position="72"/>
        <end position="76"/>
    </location>
</feature>
<feature type="region of interest" description="G3" evidence="2">
    <location>
        <begin position="93"/>
        <end position="96"/>
    </location>
</feature>
<feature type="region of interest" description="Homodimerization">
    <location>
        <begin position="128"/>
        <end position="133"/>
    </location>
</feature>
<feature type="region of interest" description="G4" evidence="2">
    <location>
        <begin position="162"/>
        <end position="165"/>
    </location>
</feature>
<feature type="region of interest" description="G5" evidence="2">
    <location>
        <begin position="210"/>
        <end position="212"/>
    </location>
</feature>
<feature type="binding site" evidence="3">
    <location>
        <begin position="49"/>
        <end position="54"/>
    </location>
    <ligand>
        <name>GTP</name>
        <dbReference type="ChEBI" id="CHEBI:37565"/>
    </ligand>
</feature>
<feature type="binding site" evidence="3">
    <location>
        <position position="73"/>
    </location>
    <ligand>
        <name>GTP</name>
        <dbReference type="ChEBI" id="CHEBI:37565"/>
    </ligand>
</feature>
<feature type="binding site" evidence="3">
    <location>
        <begin position="210"/>
        <end position="211"/>
    </location>
    <ligand>
        <name>GTP</name>
        <dbReference type="ChEBI" id="CHEBI:37565"/>
    </ligand>
</feature>
<feature type="mutagenesis site" description="No dimerization and reduced GTPase activity." evidence="3">
    <original>R</original>
    <variation>A</variation>
    <location>
        <position position="128"/>
    </location>
</feature>
<feature type="helix" evidence="5">
    <location>
        <begin position="12"/>
        <end position="16"/>
    </location>
</feature>
<feature type="helix" evidence="5">
    <location>
        <begin position="19"/>
        <end position="34"/>
    </location>
</feature>
<feature type="strand" evidence="5">
    <location>
        <begin position="39"/>
        <end position="47"/>
    </location>
</feature>
<feature type="helix" evidence="5">
    <location>
        <begin position="52"/>
        <end position="60"/>
    </location>
</feature>
<feature type="strand" evidence="5">
    <location>
        <begin position="69"/>
        <end position="71"/>
    </location>
</feature>
<feature type="strand" evidence="5">
    <location>
        <begin position="78"/>
        <end position="84"/>
    </location>
</feature>
<feature type="strand" evidence="5">
    <location>
        <begin position="87"/>
        <end position="93"/>
    </location>
</feature>
<feature type="strand" evidence="5">
    <location>
        <begin position="97"/>
        <end position="99"/>
    </location>
</feature>
<feature type="helix" evidence="5">
    <location>
        <begin position="105"/>
        <end position="114"/>
    </location>
</feature>
<feature type="turn" evidence="5">
    <location>
        <begin position="115"/>
        <end position="117"/>
    </location>
</feature>
<feature type="strand" evidence="5">
    <location>
        <begin position="122"/>
        <end position="130"/>
    </location>
</feature>
<feature type="helix" evidence="5">
    <location>
        <begin position="136"/>
        <end position="149"/>
    </location>
</feature>
<feature type="helix" evidence="5">
    <location>
        <begin position="151"/>
        <end position="156"/>
    </location>
</feature>
<feature type="strand" evidence="5">
    <location>
        <begin position="157"/>
        <end position="162"/>
    </location>
</feature>
<feature type="helix" evidence="5">
    <location>
        <begin position="169"/>
        <end position="171"/>
    </location>
</feature>
<feature type="helix" evidence="5">
    <location>
        <begin position="174"/>
        <end position="192"/>
    </location>
</feature>
<feature type="helix" evidence="5">
    <location>
        <begin position="200"/>
        <end position="202"/>
    </location>
</feature>
<feature type="strand" evidence="5">
    <location>
        <begin position="206"/>
        <end position="208"/>
    </location>
</feature>
<feature type="helix" evidence="5">
    <location>
        <begin position="231"/>
        <end position="243"/>
    </location>
</feature>
<feature type="strand" evidence="5">
    <location>
        <begin position="245"/>
        <end position="247"/>
    </location>
</feature>
<feature type="helix" evidence="5">
    <location>
        <begin position="254"/>
        <end position="258"/>
    </location>
</feature>
<keyword id="KW-0002">3D-structure</keyword>
<keyword id="KW-0150">Chloroplast</keyword>
<keyword id="KW-0903">Direct protein sequencing</keyword>
<keyword id="KW-0342">GTP-binding</keyword>
<keyword id="KW-0378">Hydrolase</keyword>
<keyword id="KW-0472">Membrane</keyword>
<keyword id="KW-0547">Nucleotide-binding</keyword>
<keyword id="KW-0934">Plastid</keyword>
<keyword id="KW-1002">Plastid outer membrane</keyword>
<keyword id="KW-0653">Protein transport</keyword>
<keyword id="KW-0812">Transmembrane</keyword>
<keyword id="KW-1133">Transmembrane helix</keyword>
<keyword id="KW-0813">Transport</keyword>
<gene>
    <name type="primary">TOC34</name>
    <name type="synonym">IAP34</name>
    <name type="synonym">OEP34</name>
</gene>
<reference key="1">
    <citation type="journal article" date="1995" name="Plant J.">
        <title>A constituent of the chloroplast import complex represents a new type of GTP-binding protein.</title>
        <authorList>
            <person name="Seedorf M."/>
            <person name="Waegemann K."/>
            <person name="Soll J."/>
        </authorList>
    </citation>
    <scope>NUCLEOTIDE SEQUENCE [MRNA]</scope>
    <scope>PARTIAL PROTEIN SEQUENCE</scope>
    <source>
        <strain>cv. Miranda</strain>
        <tissue>Leaf</tissue>
    </source>
</reference>
<reference key="2">
    <citation type="journal article" date="1994" name="Science">
        <title>Identification of two GTP-binding proteins in the chloroplast protein import machinery.</title>
        <authorList>
            <person name="Kessler F."/>
            <person name="Blobel G."/>
            <person name="Patel H.V."/>
            <person name="Schnell D.J."/>
        </authorList>
    </citation>
    <scope>NUCLEOTIDE SEQUENCE [MRNA]</scope>
    <scope>PROTEIN SEQUENCE OF 119-139 AND 157-180</scope>
</reference>
<reference key="3">
    <citation type="journal article" date="2002" name="Nat. Struct. Biol.">
        <title>Crystal structure of pea Toc34, a novel GTPase of the chloroplast protein translocon.</title>
        <authorList>
            <person name="Sun Y.-J."/>
            <person name="Forouhar F."/>
            <person name="Li Hm H.-M."/>
            <person name="Tu S.-L."/>
            <person name="Yeh Y.-H."/>
            <person name="Kao S."/>
            <person name="Shr H.-L."/>
            <person name="Chou C.-C."/>
            <person name="Chen C."/>
            <person name="Hsiao C.-D."/>
        </authorList>
    </citation>
    <scope>X-RAY CRYSTALLOGRAPHY (2.0 ANGSTROMS) OF 1-258 IN COMPLEX WITH GTP</scope>
    <scope>HOMODIMERIZATION</scope>
    <scope>MUTAGENESIS OF ARG-128</scope>
</reference>
<proteinExistence type="evidence at protein level"/>
<sequence>MASQQQTVREWSGINTFAPATQTKLLELLGNLKQEDVNSLTILVMGKGGVGKSSTVNSIIGERVVSISPFQSEGPRPVMVSRSRAGFTLNIIDTPGLIEGGYINDMALNIIKSFLLDKTIDVLLYVDRLDAYRVDNLDKLVAKAITDSFGKGIWNKAIVALTHAQFSPPDGLPYDEFFSKRSEALLQVVRSGASLKKDAQASDIPVVLIENSGRCNKNDSDEKVLPNGIAWIPHLVQTITEVALNKSESIFVDKNLIDGPNPNQRGKLWIPLIFALQYLFLAKPIEALIRRDIATETKPAWETRDVGDRK</sequence>
<accession>Q41009</accession>
<accession>Q41029</accession>
<name>TOC34_PEA</name>
<dbReference type="EC" id="3.6.5.-"/>
<dbReference type="EMBL" id="Z28341">
    <property type="protein sequence ID" value="CAA82196.1"/>
    <property type="molecule type" value="mRNA"/>
</dbReference>
<dbReference type="EMBL" id="L36856">
    <property type="protein sequence ID" value="AAC25785.1"/>
    <property type="molecule type" value="mRNA"/>
</dbReference>
<dbReference type="PIR" id="B55171">
    <property type="entry name" value="B55171"/>
</dbReference>
<dbReference type="PDB" id="1H65">
    <property type="method" value="X-ray"/>
    <property type="resolution" value="2.00 A"/>
    <property type="chains" value="A/B/C=1-258"/>
</dbReference>
<dbReference type="PDB" id="3BB1">
    <property type="method" value="X-ray"/>
    <property type="resolution" value="2.80 A"/>
    <property type="chains" value="A/B/C/D/E/F/G/H=1-266"/>
</dbReference>
<dbReference type="PDBsum" id="1H65"/>
<dbReference type="PDBsum" id="3BB1"/>
<dbReference type="SMR" id="Q41009"/>
<dbReference type="DIP" id="DIP-332N"/>
<dbReference type="IntAct" id="Q41009">
    <property type="interactions" value="9"/>
</dbReference>
<dbReference type="MINT" id="Q41009"/>
<dbReference type="TCDB" id="3.A.9.1.1">
    <property type="family name" value="the chloroplast envelope protein translocase (cept or tic-toc) family"/>
</dbReference>
<dbReference type="EnsemblPlants" id="Psat3g083600.1">
    <property type="protein sequence ID" value="Psat3g083600.1.cds"/>
    <property type="gene ID" value="Psat3g083600"/>
</dbReference>
<dbReference type="Gramene" id="Psat3g083600.1">
    <property type="protein sequence ID" value="Psat3g083600.1.cds"/>
    <property type="gene ID" value="Psat3g083600"/>
</dbReference>
<dbReference type="OrthoDB" id="8954335at2759"/>
<dbReference type="BRENDA" id="3.6.5.2">
    <property type="organism ID" value="4872"/>
</dbReference>
<dbReference type="EvolutionaryTrace" id="Q41009"/>
<dbReference type="GO" id="GO:0009707">
    <property type="term" value="C:chloroplast outer membrane"/>
    <property type="evidence" value="ECO:0007669"/>
    <property type="project" value="UniProtKB-SubCell"/>
</dbReference>
<dbReference type="GO" id="GO:0005525">
    <property type="term" value="F:GTP binding"/>
    <property type="evidence" value="ECO:0007669"/>
    <property type="project" value="UniProtKB-KW"/>
</dbReference>
<dbReference type="GO" id="GO:0016787">
    <property type="term" value="F:hydrolase activity"/>
    <property type="evidence" value="ECO:0007669"/>
    <property type="project" value="UniProtKB-KW"/>
</dbReference>
<dbReference type="GO" id="GO:0042802">
    <property type="term" value="F:identical protein binding"/>
    <property type="evidence" value="ECO:0000353"/>
    <property type="project" value="IntAct"/>
</dbReference>
<dbReference type="GO" id="GO:0015450">
    <property type="term" value="F:protein-transporting ATPase activity"/>
    <property type="evidence" value="ECO:0007669"/>
    <property type="project" value="InterPro"/>
</dbReference>
<dbReference type="GO" id="GO:0006886">
    <property type="term" value="P:intracellular protein transport"/>
    <property type="evidence" value="ECO:0007669"/>
    <property type="project" value="InterPro"/>
</dbReference>
<dbReference type="CDD" id="cd01853">
    <property type="entry name" value="Toc34_like"/>
    <property type="match status" value="1"/>
</dbReference>
<dbReference type="FunFam" id="3.40.50.300:FF:001070">
    <property type="entry name" value="Translocase of chloroplast"/>
    <property type="match status" value="1"/>
</dbReference>
<dbReference type="Gene3D" id="3.40.50.300">
    <property type="entry name" value="P-loop containing nucleotide triphosphate hydrolases"/>
    <property type="match status" value="1"/>
</dbReference>
<dbReference type="InterPro" id="IPR006703">
    <property type="entry name" value="G_AIG1"/>
</dbReference>
<dbReference type="InterPro" id="IPR045058">
    <property type="entry name" value="GIMA/IAN/Toc"/>
</dbReference>
<dbReference type="InterPro" id="IPR027417">
    <property type="entry name" value="P-loop_NTPase"/>
</dbReference>
<dbReference type="InterPro" id="IPR005688">
    <property type="entry name" value="Toc34"/>
</dbReference>
<dbReference type="NCBIfam" id="TIGR00991">
    <property type="entry name" value="3a0901s02IAP34"/>
    <property type="match status" value="1"/>
</dbReference>
<dbReference type="PANTHER" id="PTHR10903">
    <property type="entry name" value="GTPASE, IMAP FAMILY MEMBER-RELATED"/>
    <property type="match status" value="1"/>
</dbReference>
<dbReference type="PANTHER" id="PTHR10903:SF149">
    <property type="entry name" value="TRANSLOCASE OF CHLOROPLAST 33, CHLOROPLASTIC"/>
    <property type="match status" value="1"/>
</dbReference>
<dbReference type="Pfam" id="PF04548">
    <property type="entry name" value="AIG1"/>
    <property type="match status" value="1"/>
</dbReference>
<dbReference type="PIRSF" id="PIRSF038134">
    <property type="entry name" value="Toc34"/>
    <property type="match status" value="1"/>
</dbReference>
<dbReference type="SUPFAM" id="SSF52540">
    <property type="entry name" value="P-loop containing nucleoside triphosphate hydrolases"/>
    <property type="match status" value="1"/>
</dbReference>
<dbReference type="PROSITE" id="PS51720">
    <property type="entry name" value="G_AIG1"/>
    <property type="match status" value="1"/>
</dbReference>
<protein>
    <recommendedName>
        <fullName>Translocase of chloroplast 34</fullName>
        <ecNumber>3.6.5.-</ecNumber>
    </recommendedName>
    <alternativeName>
        <fullName>34 kDa chloroplast outer envelope protein</fullName>
    </alternativeName>
    <alternativeName>
        <fullName>GTP-binding protein IAP34</fullName>
    </alternativeName>
    <alternativeName>
        <fullName>GTP-binding protein OEP34</fullName>
    </alternativeName>
</protein>
<evidence type="ECO:0000255" key="1"/>
<evidence type="ECO:0000255" key="2">
    <source>
        <dbReference type="PROSITE-ProRule" id="PRU01057"/>
    </source>
</evidence>
<evidence type="ECO:0000269" key="3">
    <source>
    </source>
</evidence>
<evidence type="ECO:0000305" key="4"/>
<evidence type="ECO:0007829" key="5">
    <source>
        <dbReference type="PDB" id="1H65"/>
    </source>
</evidence>